<keyword id="KW-0949">S-adenosyl-L-methionine</keyword>
<keyword id="KW-0808">Transferase</keyword>
<comment type="function">
    <text evidence="1">Catalyzes the conversion of S-adenosyl-L-methionine (SAM) to carboxy-S-adenosyl-L-methionine (Cx-SAM).</text>
</comment>
<comment type="catalytic activity">
    <reaction evidence="1">
        <text>prephenate + S-adenosyl-L-methionine = carboxy-S-adenosyl-L-methionine + 3-phenylpyruvate + H2O</text>
        <dbReference type="Rhea" id="RHEA:51692"/>
        <dbReference type="ChEBI" id="CHEBI:15377"/>
        <dbReference type="ChEBI" id="CHEBI:18005"/>
        <dbReference type="ChEBI" id="CHEBI:29934"/>
        <dbReference type="ChEBI" id="CHEBI:59789"/>
        <dbReference type="ChEBI" id="CHEBI:134278"/>
    </reaction>
</comment>
<comment type="subunit">
    <text evidence="1">Homodimer.</text>
</comment>
<comment type="similarity">
    <text evidence="1">Belongs to the class I-like SAM-binding methyltransferase superfamily. Cx-SAM synthase family.</text>
</comment>
<proteinExistence type="inferred from homology"/>
<gene>
    <name evidence="1" type="primary">cmoA</name>
    <name type="ordered locus">ECIAI1_1957</name>
</gene>
<sequence length="247" mass="27791">MSHRDTLFSAPIARLGDWTFDERVAEVFPDMIQRSVPGYSNIISMIGMLAERFVQPGTQVYDLGCSLGAATLSVRRNIHHDNCKIIAIDNSPAMIERCRRHIDAYKAPTPVDVIEGDIRDIAIENASMVVLNFTLQFLEPSERQALLDKIYQGLNPGGALVLSEKFSFEDAKVGELLFNMHHDFKRANGYSELEISQKRSMLENVMLTDSVETHKARLHKAGFEHSELWFQCFNFGSLVALKAEDAA</sequence>
<reference key="1">
    <citation type="journal article" date="2009" name="PLoS Genet.">
        <title>Organised genome dynamics in the Escherichia coli species results in highly diverse adaptive paths.</title>
        <authorList>
            <person name="Touchon M."/>
            <person name="Hoede C."/>
            <person name="Tenaillon O."/>
            <person name="Barbe V."/>
            <person name="Baeriswyl S."/>
            <person name="Bidet P."/>
            <person name="Bingen E."/>
            <person name="Bonacorsi S."/>
            <person name="Bouchier C."/>
            <person name="Bouvet O."/>
            <person name="Calteau A."/>
            <person name="Chiapello H."/>
            <person name="Clermont O."/>
            <person name="Cruveiller S."/>
            <person name="Danchin A."/>
            <person name="Diard M."/>
            <person name="Dossat C."/>
            <person name="Karoui M.E."/>
            <person name="Frapy E."/>
            <person name="Garry L."/>
            <person name="Ghigo J.M."/>
            <person name="Gilles A.M."/>
            <person name="Johnson J."/>
            <person name="Le Bouguenec C."/>
            <person name="Lescat M."/>
            <person name="Mangenot S."/>
            <person name="Martinez-Jehanne V."/>
            <person name="Matic I."/>
            <person name="Nassif X."/>
            <person name="Oztas S."/>
            <person name="Petit M.A."/>
            <person name="Pichon C."/>
            <person name="Rouy Z."/>
            <person name="Ruf C.S."/>
            <person name="Schneider D."/>
            <person name="Tourret J."/>
            <person name="Vacherie B."/>
            <person name="Vallenet D."/>
            <person name="Medigue C."/>
            <person name="Rocha E.P.C."/>
            <person name="Denamur E."/>
        </authorList>
    </citation>
    <scope>NUCLEOTIDE SEQUENCE [LARGE SCALE GENOMIC DNA]</scope>
    <source>
        <strain>IAI1</strain>
    </source>
</reference>
<evidence type="ECO:0000255" key="1">
    <source>
        <dbReference type="HAMAP-Rule" id="MF_01589"/>
    </source>
</evidence>
<dbReference type="EC" id="2.1.3.-" evidence="1"/>
<dbReference type="EMBL" id="CU928160">
    <property type="protein sequence ID" value="CAQ98810.1"/>
    <property type="molecule type" value="Genomic_DNA"/>
</dbReference>
<dbReference type="RefSeq" id="WP_000019588.1">
    <property type="nucleotide sequence ID" value="NC_011741.1"/>
</dbReference>
<dbReference type="SMR" id="B7M2G1"/>
<dbReference type="GeneID" id="75202724"/>
<dbReference type="KEGG" id="ecr:ECIAI1_1957"/>
<dbReference type="HOGENOM" id="CLU_078475_0_0_6"/>
<dbReference type="GO" id="GO:0016743">
    <property type="term" value="F:carboxyl- or carbamoyltransferase activity"/>
    <property type="evidence" value="ECO:0007669"/>
    <property type="project" value="UniProtKB-UniRule"/>
</dbReference>
<dbReference type="GO" id="GO:1904047">
    <property type="term" value="F:S-adenosyl-L-methionine binding"/>
    <property type="evidence" value="ECO:0007669"/>
    <property type="project" value="UniProtKB-UniRule"/>
</dbReference>
<dbReference type="GO" id="GO:0002098">
    <property type="term" value="P:tRNA wobble uridine modification"/>
    <property type="evidence" value="ECO:0007669"/>
    <property type="project" value="InterPro"/>
</dbReference>
<dbReference type="CDD" id="cd02440">
    <property type="entry name" value="AdoMet_MTases"/>
    <property type="match status" value="1"/>
</dbReference>
<dbReference type="FunFam" id="3.40.50.150:FF:000030">
    <property type="entry name" value="Carboxy-S-adenosyl-L-methionine synthase"/>
    <property type="match status" value="1"/>
</dbReference>
<dbReference type="Gene3D" id="3.40.50.150">
    <property type="entry name" value="Vaccinia Virus protein VP39"/>
    <property type="match status" value="1"/>
</dbReference>
<dbReference type="HAMAP" id="MF_01589">
    <property type="entry name" value="Cx_SAM_synthase"/>
    <property type="match status" value="1"/>
</dbReference>
<dbReference type="InterPro" id="IPR005271">
    <property type="entry name" value="CmoA"/>
</dbReference>
<dbReference type="InterPro" id="IPR041698">
    <property type="entry name" value="Methyltransf_25"/>
</dbReference>
<dbReference type="InterPro" id="IPR029063">
    <property type="entry name" value="SAM-dependent_MTases_sf"/>
</dbReference>
<dbReference type="NCBIfam" id="TIGR00740">
    <property type="entry name" value="carboxy-S-adenosyl-L-methionine synthase CmoA"/>
    <property type="match status" value="1"/>
</dbReference>
<dbReference type="NCBIfam" id="NF011995">
    <property type="entry name" value="PRK15451.1"/>
    <property type="match status" value="1"/>
</dbReference>
<dbReference type="PANTHER" id="PTHR43861:SF2">
    <property type="entry name" value="CARBOXY-S-ADENOSYL-L-METHIONINE SYNTHASE"/>
    <property type="match status" value="1"/>
</dbReference>
<dbReference type="PANTHER" id="PTHR43861">
    <property type="entry name" value="TRANS-ACONITATE 2-METHYLTRANSFERASE-RELATED"/>
    <property type="match status" value="1"/>
</dbReference>
<dbReference type="Pfam" id="PF13649">
    <property type="entry name" value="Methyltransf_25"/>
    <property type="match status" value="1"/>
</dbReference>
<dbReference type="PIRSF" id="PIRSF006325">
    <property type="entry name" value="MeTrfase_bac"/>
    <property type="match status" value="1"/>
</dbReference>
<dbReference type="SUPFAM" id="SSF53335">
    <property type="entry name" value="S-adenosyl-L-methionine-dependent methyltransferases"/>
    <property type="match status" value="1"/>
</dbReference>
<name>CMOA_ECO8A</name>
<accession>B7M2G1</accession>
<feature type="chain" id="PRO_1000201353" description="Carboxy-S-adenosyl-L-methionine synthase">
    <location>
        <begin position="1"/>
        <end position="247"/>
    </location>
</feature>
<feature type="binding site" evidence="1">
    <location>
        <position position="39"/>
    </location>
    <ligand>
        <name>S-adenosyl-L-methionine</name>
        <dbReference type="ChEBI" id="CHEBI:59789"/>
    </ligand>
</feature>
<feature type="binding site" evidence="1">
    <location>
        <begin position="64"/>
        <end position="66"/>
    </location>
    <ligand>
        <name>S-adenosyl-L-methionine</name>
        <dbReference type="ChEBI" id="CHEBI:59789"/>
    </ligand>
</feature>
<feature type="binding site" evidence="1">
    <location>
        <begin position="89"/>
        <end position="90"/>
    </location>
    <ligand>
        <name>S-adenosyl-L-methionine</name>
        <dbReference type="ChEBI" id="CHEBI:59789"/>
    </ligand>
</feature>
<feature type="binding site" evidence="1">
    <location>
        <begin position="117"/>
        <end position="118"/>
    </location>
    <ligand>
        <name>S-adenosyl-L-methionine</name>
        <dbReference type="ChEBI" id="CHEBI:59789"/>
    </ligand>
</feature>
<feature type="binding site" evidence="1">
    <location>
        <position position="132"/>
    </location>
    <ligand>
        <name>S-adenosyl-L-methionine</name>
        <dbReference type="ChEBI" id="CHEBI:59789"/>
    </ligand>
</feature>
<feature type="binding site" evidence="1">
    <location>
        <position position="199"/>
    </location>
    <ligand>
        <name>S-adenosyl-L-methionine</name>
        <dbReference type="ChEBI" id="CHEBI:59789"/>
    </ligand>
</feature>
<protein>
    <recommendedName>
        <fullName evidence="1">Carboxy-S-adenosyl-L-methionine synthase</fullName>
        <shortName evidence="1">Cx-SAM synthase</shortName>
        <ecNumber evidence="1">2.1.3.-</ecNumber>
    </recommendedName>
</protein>
<organism>
    <name type="scientific">Escherichia coli O8 (strain IAI1)</name>
    <dbReference type="NCBI Taxonomy" id="585034"/>
    <lineage>
        <taxon>Bacteria</taxon>
        <taxon>Pseudomonadati</taxon>
        <taxon>Pseudomonadota</taxon>
        <taxon>Gammaproteobacteria</taxon>
        <taxon>Enterobacterales</taxon>
        <taxon>Enterobacteriaceae</taxon>
        <taxon>Escherichia</taxon>
    </lineage>
</organism>